<comment type="function">
    <text evidence="1">The coatomer is a cytosolic protein complex that binds to dilysine motifs and reversibly associates with Golgi non-clathrin-coated vesicles, which further mediate biosynthetic protein transport from the ER, via the Golgi up to the trans Golgi network. The coatomer complex is required for budding from Golgi membranes, and is essential for the retrograde Golgi-to-ER transport of dilysine-tagged proteins. In mammals, the coatomer can only be recruited by membranes associated with ADP-ribosylation factors (ARFs), which are small GTP-binding proteins; the complex also influences the Golgi structural integrity, as well as the processing, activity, and endocytic recycling of LDL receptors (By similarity).</text>
</comment>
<comment type="subunit">
    <text>Oligomeric complex that consists of at least the alpha, beta, beta', gamma, delta, epsilon and zeta subunits.</text>
</comment>
<comment type="subcellular location">
    <subcellularLocation>
        <location evidence="1">Cytoplasm</location>
    </subcellularLocation>
    <subcellularLocation>
        <location evidence="1">Golgi apparatus membrane</location>
        <topology evidence="1">Peripheral membrane protein</topology>
        <orientation evidence="1">Cytoplasmic side</orientation>
    </subcellularLocation>
    <subcellularLocation>
        <location evidence="1">Cytoplasmic vesicle</location>
        <location evidence="1">COPI-coated vesicle membrane</location>
        <topology evidence="1">Peripheral membrane protein</topology>
        <orientation evidence="1">Cytoplasmic side</orientation>
    </subcellularLocation>
    <text evidence="1">The coatomer is cytoplasmic or polymerized on the cytoplasmic side of the Golgi, as well as on the vesicles/buds originating from it.</text>
</comment>
<comment type="PTM">
    <text evidence="1">Polyubiquitinated by RCHY1 in the presence of androgen, leading to proteasomal degradation.</text>
</comment>
<comment type="similarity">
    <text evidence="3">Belongs to the COPE family.</text>
</comment>
<gene>
    <name type="primary">COPE</name>
</gene>
<keyword id="KW-0963">Cytoplasm</keyword>
<keyword id="KW-0968">Cytoplasmic vesicle</keyword>
<keyword id="KW-0931">ER-Golgi transport</keyword>
<keyword id="KW-0333">Golgi apparatus</keyword>
<keyword id="KW-0472">Membrane</keyword>
<keyword id="KW-0597">Phosphoprotein</keyword>
<keyword id="KW-0653">Protein transport</keyword>
<keyword id="KW-0813">Transport</keyword>
<keyword id="KW-0832">Ubl conjugation</keyword>
<sequence length="308" mass="34523">MAPPAPGAASGGSGEVDELFDVKNAFYIGSYQQCINEAQRVKLSSPDREVERDVFLYRAYIAQRKYGVVLDEIKPSSAPELQAVRMFADYLATENRRDAIVVELDREMSRSVDVTNTTFLLMAASVYFHDQNPDAALRTLHQGDSLECMAMTIQILLKLDRLDLARKELKKMQDQDEDATLTQLATAWVNLAVGGEKLQEAYYIFQELADKCSPTLLLLNGQAACHSAQGRWETAEGVLQEALDKDSGHPETLINLIVLSQHLGKPPEVTNRYLSQLKDAHRTHPFIKEYQAKENDFDRLALQYAPSA</sequence>
<protein>
    <recommendedName>
        <fullName>Coatomer subunit epsilon</fullName>
    </recommendedName>
    <alternativeName>
        <fullName>Epsilon-coat protein</fullName>
        <shortName>Epsilon-COP</shortName>
    </alternativeName>
    <alternativeName>
        <fullName>LDLF</fullName>
    </alternativeName>
</protein>
<proteinExistence type="evidence at transcript level"/>
<evidence type="ECO:0000250" key="1"/>
<evidence type="ECO:0000250" key="2">
    <source>
        <dbReference type="UniProtKB" id="O14579"/>
    </source>
</evidence>
<evidence type="ECO:0000305" key="3"/>
<feature type="chain" id="PRO_0000193850" description="Coatomer subunit epsilon">
    <location>
        <begin position="1"/>
        <end position="308"/>
    </location>
</feature>
<feature type="modified residue" description="Phosphoserine" evidence="2">
    <location>
        <position position="13"/>
    </location>
</feature>
<feature type="modified residue" description="Phosphoserine" evidence="2">
    <location>
        <position position="45"/>
    </location>
</feature>
<reference key="1">
    <citation type="journal article" date="1994" name="J. Cell Biol.">
        <title>Disruptions in Golgi structure and membrane traffic in a conditional lethal mammalian cell mutant are corrected by epsilon-COP.</title>
        <authorList>
            <person name="Guo Q."/>
            <person name="Vasile E."/>
            <person name="Krieger M."/>
        </authorList>
    </citation>
    <scope>NUCLEOTIDE SEQUENCE [MRNA]</scope>
</reference>
<accession>Q60445</accession>
<name>COPE_CRIGR</name>
<organism>
    <name type="scientific">Cricetulus griseus</name>
    <name type="common">Chinese hamster</name>
    <name type="synonym">Cricetulus barabensis griseus</name>
    <dbReference type="NCBI Taxonomy" id="10029"/>
    <lineage>
        <taxon>Eukaryota</taxon>
        <taxon>Metazoa</taxon>
        <taxon>Chordata</taxon>
        <taxon>Craniata</taxon>
        <taxon>Vertebrata</taxon>
        <taxon>Euteleostomi</taxon>
        <taxon>Mammalia</taxon>
        <taxon>Eutheria</taxon>
        <taxon>Euarchontoglires</taxon>
        <taxon>Glires</taxon>
        <taxon>Rodentia</taxon>
        <taxon>Myomorpha</taxon>
        <taxon>Muroidea</taxon>
        <taxon>Cricetidae</taxon>
        <taxon>Cricetinae</taxon>
        <taxon>Cricetulus</taxon>
    </lineage>
</organism>
<dbReference type="EMBL" id="Z32554">
    <property type="protein sequence ID" value="CAA83551.1"/>
    <property type="molecule type" value="mRNA"/>
</dbReference>
<dbReference type="PIR" id="I48080">
    <property type="entry name" value="I48080"/>
</dbReference>
<dbReference type="RefSeq" id="NP_001233606.1">
    <property type="nucleotide sequence ID" value="NM_001246677.1"/>
</dbReference>
<dbReference type="SMR" id="Q60445"/>
<dbReference type="PaxDb" id="10029-NP_001233606.1"/>
<dbReference type="Ensembl" id="ENSCGRT00001031411.1">
    <property type="protein sequence ID" value="ENSCGRP00001027164.1"/>
    <property type="gene ID" value="ENSCGRG00001024248.1"/>
</dbReference>
<dbReference type="Ensembl" id="ENSCGRT00001031417.1">
    <property type="protein sequence ID" value="ENSCGRP00001027170.1"/>
    <property type="gene ID" value="ENSCGRG00001024248.1"/>
</dbReference>
<dbReference type="GeneID" id="100689412"/>
<dbReference type="KEGG" id="cge:100689412"/>
<dbReference type="CTD" id="11316"/>
<dbReference type="eggNOG" id="KOG3081">
    <property type="taxonomic scope" value="Eukaryota"/>
</dbReference>
<dbReference type="GeneTree" id="ENSGT00390000003478"/>
<dbReference type="OMA" id="MIVLSQH"/>
<dbReference type="OrthoDB" id="310217at2759"/>
<dbReference type="Proteomes" id="UP000694386">
    <property type="component" value="Unplaced"/>
</dbReference>
<dbReference type="Proteomes" id="UP001108280">
    <property type="component" value="Chromosome 1"/>
</dbReference>
<dbReference type="GO" id="GO:0030126">
    <property type="term" value="C:COPI vesicle coat"/>
    <property type="evidence" value="ECO:0007669"/>
    <property type="project" value="TreeGrafter"/>
</dbReference>
<dbReference type="GO" id="GO:0000139">
    <property type="term" value="C:Golgi membrane"/>
    <property type="evidence" value="ECO:0007669"/>
    <property type="project" value="UniProtKB-SubCell"/>
</dbReference>
<dbReference type="GO" id="GO:0005654">
    <property type="term" value="C:nucleoplasm"/>
    <property type="evidence" value="ECO:0007669"/>
    <property type="project" value="Ensembl"/>
</dbReference>
<dbReference type="GO" id="GO:0005198">
    <property type="term" value="F:structural molecule activity"/>
    <property type="evidence" value="ECO:0007669"/>
    <property type="project" value="InterPro"/>
</dbReference>
<dbReference type="GO" id="GO:0006888">
    <property type="term" value="P:endoplasmic reticulum to Golgi vesicle-mediated transport"/>
    <property type="evidence" value="ECO:0007669"/>
    <property type="project" value="TreeGrafter"/>
</dbReference>
<dbReference type="GO" id="GO:0006891">
    <property type="term" value="P:intra-Golgi vesicle-mediated transport"/>
    <property type="evidence" value="ECO:0007669"/>
    <property type="project" value="TreeGrafter"/>
</dbReference>
<dbReference type="GO" id="GO:0099612">
    <property type="term" value="P:protein localization to axon"/>
    <property type="evidence" value="ECO:0007669"/>
    <property type="project" value="Ensembl"/>
</dbReference>
<dbReference type="GO" id="GO:0015031">
    <property type="term" value="P:protein transport"/>
    <property type="evidence" value="ECO:0007669"/>
    <property type="project" value="UniProtKB-KW"/>
</dbReference>
<dbReference type="GO" id="GO:0006890">
    <property type="term" value="P:retrograde vesicle-mediated transport, Golgi to endoplasmic reticulum"/>
    <property type="evidence" value="ECO:0007669"/>
    <property type="project" value="InterPro"/>
</dbReference>
<dbReference type="FunFam" id="1.25.40.10:FF:000148">
    <property type="entry name" value="Coatomer subunit epsilon"/>
    <property type="match status" value="1"/>
</dbReference>
<dbReference type="Gene3D" id="1.25.40.10">
    <property type="entry name" value="Tetratricopeptide repeat domain"/>
    <property type="match status" value="1"/>
</dbReference>
<dbReference type="InterPro" id="IPR006822">
    <property type="entry name" value="Coatomer_esu"/>
</dbReference>
<dbReference type="InterPro" id="IPR011990">
    <property type="entry name" value="TPR-like_helical_dom_sf"/>
</dbReference>
<dbReference type="PANTHER" id="PTHR10805">
    <property type="entry name" value="COATOMER SUBUNIT EPSILON"/>
    <property type="match status" value="1"/>
</dbReference>
<dbReference type="PANTHER" id="PTHR10805:SF0">
    <property type="entry name" value="COATOMER SUBUNIT EPSILON"/>
    <property type="match status" value="1"/>
</dbReference>
<dbReference type="Pfam" id="PF04733">
    <property type="entry name" value="Coatomer_E"/>
    <property type="match status" value="1"/>
</dbReference>
<dbReference type="PIRSF" id="PIRSF016478">
    <property type="entry name" value="Coatomer_esu"/>
    <property type="match status" value="1"/>
</dbReference>
<dbReference type="SUPFAM" id="SSF48452">
    <property type="entry name" value="TPR-like"/>
    <property type="match status" value="1"/>
</dbReference>